<accession>A0A1D5RMD1</accession>
<evidence type="ECO:0000255" key="1">
    <source>
        <dbReference type="PROSITE-ProRule" id="PRU00116"/>
    </source>
</evidence>
<evidence type="ECO:0000256" key="2">
    <source>
        <dbReference type="SAM" id="MobiDB-lite"/>
    </source>
</evidence>
<evidence type="ECO:0000269" key="3">
    <source>
    </source>
</evidence>
<keyword id="KW-0217">Developmental protein</keyword>
<keyword id="KW-1185">Reference proteome</keyword>
<keyword id="KW-0677">Repeat</keyword>
<feature type="chain" id="PRO_0000457838" description="IQ domain-containing protein N">
    <location>
        <begin position="1"/>
        <end position="1437"/>
    </location>
</feature>
<feature type="domain" description="IQ 1" evidence="1">
    <location>
        <begin position="84"/>
        <end position="112"/>
    </location>
</feature>
<feature type="domain" description="IQ 2" evidence="1">
    <location>
        <begin position="1190"/>
        <end position="1216"/>
    </location>
</feature>
<feature type="domain" description="IQ 3" evidence="1">
    <location>
        <begin position="1217"/>
        <end position="1239"/>
    </location>
</feature>
<feature type="domain" description="IQ 4" evidence="1">
    <location>
        <begin position="1240"/>
        <end position="1258"/>
    </location>
</feature>
<feature type="domain" description="IQ 5" evidence="1">
    <location>
        <begin position="1361"/>
        <end position="1389"/>
    </location>
</feature>
<feature type="domain" description="IQ 6" evidence="1">
    <location>
        <begin position="1390"/>
        <end position="1413"/>
    </location>
</feature>
<feature type="region of interest" description="Disordered" evidence="2">
    <location>
        <begin position="332"/>
        <end position="353"/>
    </location>
</feature>
<feature type="region of interest" description="Disordered" evidence="2">
    <location>
        <begin position="416"/>
        <end position="440"/>
    </location>
</feature>
<feature type="region of interest" description="Disordered" evidence="2">
    <location>
        <begin position="848"/>
        <end position="878"/>
    </location>
</feature>
<feature type="compositionally biased region" description="Low complexity" evidence="2">
    <location>
        <begin position="422"/>
        <end position="440"/>
    </location>
</feature>
<feature type="compositionally biased region" description="Polar residues" evidence="2">
    <location>
        <begin position="861"/>
        <end position="878"/>
    </location>
</feature>
<proteinExistence type="evidence at protein level"/>
<reference key="1">
    <citation type="journal article" date="2009" name="PLoS Biol.">
        <title>Lineage-specific biology revealed by a finished genome assembly of the mouse.</title>
        <authorList>
            <person name="Church D.M."/>
            <person name="Goodstadt L."/>
            <person name="Hillier L.W."/>
            <person name="Zody M.C."/>
            <person name="Goldstein S."/>
            <person name="She X."/>
            <person name="Bult C.J."/>
            <person name="Agarwala R."/>
            <person name="Cherry J.L."/>
            <person name="DiCuccio M."/>
            <person name="Hlavina W."/>
            <person name="Kapustin Y."/>
            <person name="Meric P."/>
            <person name="Maglott D."/>
            <person name="Birtle Z."/>
            <person name="Marques A.C."/>
            <person name="Graves T."/>
            <person name="Zhou S."/>
            <person name="Teague B."/>
            <person name="Potamousis K."/>
            <person name="Churas C."/>
            <person name="Place M."/>
            <person name="Herschleb J."/>
            <person name="Runnheim R."/>
            <person name="Forrest D."/>
            <person name="Amos-Landgraf J."/>
            <person name="Schwartz D.C."/>
            <person name="Cheng Z."/>
            <person name="Lindblad-Toh K."/>
            <person name="Eichler E.E."/>
            <person name="Ponting C.P."/>
        </authorList>
    </citation>
    <scope>NUCLEOTIDE SEQUENCE [LARGE SCALE GENOMIC DNA]</scope>
    <source>
        <strain>C57BL/6J</strain>
    </source>
</reference>
<reference key="2">
    <citation type="journal article" date="2022" name="EMBO Mol. Med.">
        <title>IQCN disruption causes fertilization failure and male infertility due to manchette assembly defect.</title>
        <authorList>
            <person name="Dai J."/>
            <person name="Li Q."/>
            <person name="Zhou Q."/>
            <person name="Zhang S."/>
            <person name="Chen J."/>
            <person name="Wang Y."/>
            <person name="Guo J."/>
            <person name="Gu Y."/>
            <person name="Gong F."/>
            <person name="Tan Y."/>
            <person name="Lu G."/>
            <person name="Zheng W."/>
            <person name="Lin G."/>
        </authorList>
    </citation>
    <scope>FUNCTION</scope>
    <scope>DISRUPTION PHENOTYPE</scope>
    <scope>TISSUE SPECIFICITY</scope>
    <scope>DEVELOPMENTAL STAGE</scope>
    <scope>INTERACTION WITH CALMODULIN</scope>
</reference>
<dbReference type="EMBL" id="AC162446">
    <property type="status" value="NOT_ANNOTATED_CDS"/>
    <property type="molecule type" value="Genomic_DNA"/>
</dbReference>
<dbReference type="RefSeq" id="NP_001357775.1">
    <property type="nucleotide sequence ID" value="NM_001370846.1"/>
</dbReference>
<dbReference type="RefSeq" id="NP_001357776.1">
    <property type="nucleotide sequence ID" value="NM_001370847.1"/>
</dbReference>
<dbReference type="RefSeq" id="XP_006509879.1">
    <property type="nucleotide sequence ID" value="XM_006509816.2"/>
</dbReference>
<dbReference type="FunCoup" id="A0A1D5RMD1">
    <property type="interactions" value="158"/>
</dbReference>
<dbReference type="STRING" id="10090.ENSMUSP00000148728"/>
<dbReference type="GlyGen" id="A0A1D5RMD1">
    <property type="glycosylation" value="1 site"/>
</dbReference>
<dbReference type="iPTMnet" id="A0A1D5RMD1"/>
<dbReference type="PhosphoSitePlus" id="A0A1D5RMD1"/>
<dbReference type="jPOST" id="A0A1D5RMD1"/>
<dbReference type="ProteomicsDB" id="306337"/>
<dbReference type="Antibodypedia" id="51823">
    <property type="antibodies" value="21 antibodies from 10 providers"/>
</dbReference>
<dbReference type="GeneID" id="637079"/>
<dbReference type="MGI" id="MGI:3708784">
    <property type="gene designation" value="Iqcn"/>
</dbReference>
<dbReference type="VEuPathDB" id="HostDB:ENSMUSG00000110622"/>
<dbReference type="InParanoid" id="A0A1D5RMD1"/>
<dbReference type="PRO" id="PR:A0A1D5RMD1"/>
<dbReference type="Proteomes" id="UP000000589">
    <property type="component" value="Chromosome 8"/>
</dbReference>
<dbReference type="RNAct" id="A0A1D5RMD1">
    <property type="molecule type" value="protein"/>
</dbReference>
<dbReference type="Bgee" id="ENSMUSG00000110622">
    <property type="expression patterns" value="Expressed in testis and 7 other cell types or tissues"/>
</dbReference>
<dbReference type="GO" id="GO:0007338">
    <property type="term" value="P:single fertilization"/>
    <property type="evidence" value="ECO:0000315"/>
    <property type="project" value="MGI"/>
</dbReference>
<dbReference type="GO" id="GO:0120316">
    <property type="term" value="P:sperm flagellum assembly"/>
    <property type="evidence" value="ECO:0000315"/>
    <property type="project" value="MGI"/>
</dbReference>
<dbReference type="GO" id="GO:0007286">
    <property type="term" value="P:spermatid development"/>
    <property type="evidence" value="ECO:0000315"/>
    <property type="project" value="UniProtKB"/>
</dbReference>
<dbReference type="CDD" id="cd23767">
    <property type="entry name" value="IQCD"/>
    <property type="match status" value="5"/>
</dbReference>
<dbReference type="FunFam" id="1.20.5.190:FF:000021">
    <property type="entry name" value="IQ motif containing N"/>
    <property type="match status" value="1"/>
</dbReference>
<dbReference type="FunFam" id="1.20.5.190:FF:000041">
    <property type="entry name" value="IQ motif containing N"/>
    <property type="match status" value="1"/>
</dbReference>
<dbReference type="Gene3D" id="1.20.5.190">
    <property type="match status" value="3"/>
</dbReference>
<dbReference type="InterPro" id="IPR052318">
    <property type="entry name" value="CellDiv_DevSignal_Domain"/>
</dbReference>
<dbReference type="InterPro" id="IPR000048">
    <property type="entry name" value="IQ_motif_EF-hand-BS"/>
</dbReference>
<dbReference type="InterPro" id="IPR027417">
    <property type="entry name" value="P-loop_NTPase"/>
</dbReference>
<dbReference type="PANTHER" id="PTHR22590:SF2">
    <property type="entry name" value="IQ DOMAIN-CONTAINING PROTEIN N"/>
    <property type="match status" value="1"/>
</dbReference>
<dbReference type="PANTHER" id="PTHR22590">
    <property type="entry name" value="MYOSIN MOTOR DOMAIN-CONTAINING PROTEIN"/>
    <property type="match status" value="1"/>
</dbReference>
<dbReference type="Pfam" id="PF00612">
    <property type="entry name" value="IQ"/>
    <property type="match status" value="5"/>
</dbReference>
<dbReference type="SMART" id="SM00015">
    <property type="entry name" value="IQ"/>
    <property type="match status" value="7"/>
</dbReference>
<dbReference type="SUPFAM" id="SSF52540">
    <property type="entry name" value="P-loop containing nucleoside triphosphate hydrolases"/>
    <property type="match status" value="2"/>
</dbReference>
<dbReference type="PROSITE" id="PS50096">
    <property type="entry name" value="IQ"/>
    <property type="match status" value="6"/>
</dbReference>
<gene>
    <name type="primary">Iqcn</name>
</gene>
<organism>
    <name type="scientific">Mus musculus</name>
    <name type="common">Mouse</name>
    <dbReference type="NCBI Taxonomy" id="10090"/>
    <lineage>
        <taxon>Eukaryota</taxon>
        <taxon>Metazoa</taxon>
        <taxon>Chordata</taxon>
        <taxon>Craniata</taxon>
        <taxon>Vertebrata</taxon>
        <taxon>Euteleostomi</taxon>
        <taxon>Mammalia</taxon>
        <taxon>Eutheria</taxon>
        <taxon>Euarchontoglires</taxon>
        <taxon>Glires</taxon>
        <taxon>Rodentia</taxon>
        <taxon>Myomorpha</taxon>
        <taxon>Muroidea</taxon>
        <taxon>Muridae</taxon>
        <taxon>Murinae</taxon>
        <taxon>Mus</taxon>
        <taxon>Mus</taxon>
    </lineage>
</organism>
<comment type="function">
    <text evidence="3">Essential for spermiogenesis and fertilization. May be required for manchette assembly in elongating spermatids.</text>
</comment>
<comment type="subunit">
    <text evidence="3">Interacts with calmodulin.</text>
</comment>
<comment type="tissue specificity">
    <text evidence="3">Expressed in testis, in elongating spermatids (at protein level).</text>
</comment>
<comment type="developmental stage">
    <text evidence="3">Expressed in elongating spermatids (steps 8-14) during spermiogenesis (at protein level).</text>
</comment>
<comment type="disruption phenotype">
    <text evidence="3">knockout male mice fail to produce offspring, while in females, fertility is normal. Males have normal testis weight and size with normal spermatogenesis and sperm count. However, they exhibit defects in sperm morphology with abnormal acrosome structure.</text>
</comment>
<name>IQCN_MOUSE</name>
<protein>
    <recommendedName>
        <fullName>IQ domain-containing protein N</fullName>
    </recommendedName>
</protein>
<sequence length="1437" mass="154933">MAAMQPAAQLQFQNLMSPSGPSLPQPTPIHQEKVAKLCPQLQHDFYPSEELAVLPSQEVPRLRAVVESQAFRNILVDEMDMMVSRAATVIQASWKGYRLRQKLISQMTAAKAIQEAWRRFSTRRLMHSNRLTVKKAKREDEEDIPYHQPQQVRFHAPEDQPPVMVTKETQFPSFDNLVPSQATAGPCASRVPGGGLHPQYVINRLTVPKYQPCMLTKTFRSSCLMRHLEGDSLKIRHVASKTIKVGALEAAATGRYGQAMHGSLKTQTQAHTESDVPKAPLRIYPVNKTHTKVCPMAAAVPESSATMSTAPRSAPQARPTSPATVMKMQATTSPTSPVIRLPAPVGPNSSLSNTTPQMQVRYMMPGARIQPPGSAVASTIKALPHFGAPVMKVPLQTGPGFTMTKTSLQMRPMTRSQAQTYTVSTSSKTSPSSPTVKPSPQTRLAAMLTKTPAQLRSVAAVFRTLCGGTTEAVASSPRCSPQSPVVAGNTPSQVHLNSTRTKVTVSTKQATTVVKVNSQSYLGRCGSQGNLDTIVPKPPATYPLEVEKMKSCPARSPKKEAALKTNTTIAARALSWTKMMEDRSKALTQIKQRAEIIKVHFRVYMPEEIPVTLTQAQLAVPLTKSSSQIQPPPCHARTQPTSPFCKAVSQSCMPSGLAHGTPEGQRPPVGLSASLSSSPLAAHLMSLTAQLQPACEQARSVSRDHLTRSCPASASLQARSSGTIVPPEVYPNTYSPTSAPQHHMASLLAKSSSQLHPPAEHAKTMNTKTTKAACQVCPSTKLSKAPSLAQLITCLAKVPSQAQLATETAKCLLAAHPTTDHRSKTQSQTFLSSSKASVQLWQHLGTLSTGSRAKPDDRSVAQPQLHSHAPNKTMQNPRSVVTDSQGMLIPLMTPSGHPVCNAESWGDSGRAQTPPPSPVPNQAVPCHDDLAASVASLCADLVAMLGSPEDLRTLLVKTLSQGEVRTALSQALSREVLGPSVVKALPQGMLGMALMKALSWGELGISLSRALSRGELRPELNKATQGKLAEVLCKALTEEERATLSQALCQGELGAVFTQSLAQMAQRTGTFLPKATSKTVGSRMTTAPAPVEVTCSGSLSVAWGPAMGPVGARCSKGPVDAGLASGQSWNSKVPNVSVRATAHAGAPQGVWYPSRGHKPWDPIGAEAELDRKPSAELLMSVQGMEKVVVQAVVTIQACARGYLVRRTVKVWHQWATIIQATWRGYRVRRNLERLFRATTIIQAAWRGYCIRRARARQVLLPIAWPEHSGRTKGTLDNRNSSEHRCFLSCQPDVCSVCQSLGPPVESPPSVVMLVGSQPRTCHVCGHTLSTRVVQGFGQGISGQPVSRWASASQQNTLLSQQHRACTIIQAAWKGYRTRRQLSQKQSAAKMVQAVWRGHYTRSCLTTDALLGTGGPWSISRDTSRHSSRAYSLHWPGV</sequence>